<name>MUTL_XYLF2</name>
<sequence>MPIRQLPEILINQIAAGEVVERPASVVKELVENAIDAGATRVDIELEAAGVRLIRIRDNGHGMAAQELPLAVLRHATSKIASLDDLEAVATLGFRGEALPSIASVSRFTLMSRRATDEHGAVLQIEGGTLGEVIPHAHAPGTTVEVRELFYNVPARRKFLRAERTELGHIEEWARSLALAHPDLELRLSHNGKLSRRYKPGDWYSDVRLIEILGEDFAHQALRVDHSGAGLRLHGCIVQPHYSRLNADQQYLYVNGRPVRDRSVAHAVKQAYSDVLYQGRHPAYVLFLELDPARVDVNVHPAKHEVRFRDARLIHDFVYRTVQGTLAQTRAGTPPLAVGVGDVEGEGARPPGRHAVSFSGRRGGASHVLGSYSASTAPLMQGVPSVSVADAPAAYAALYAAPPTQVMDAVPQMQTGLPLAAGAGDVPLLGYAIAQLHGIYILAECADGLIVVDMHAAHERIGYERLKRAHDGIGLRTQPLLVPMTLMVAEREADVAECEAETLANLGFEVTRSGPGSLQVRSIPALLSQAEPEMLLRDVLSDLSEHGHTRRVAEARDTLLATMACHGAVRAHRRLSISEMNALLRDMEATERSGQCNHGRPTWARFSLAEIDRWFLRGR</sequence>
<evidence type="ECO:0000255" key="1">
    <source>
        <dbReference type="HAMAP-Rule" id="MF_00149"/>
    </source>
</evidence>
<comment type="function">
    <text evidence="1">This protein is involved in the repair of mismatches in DNA. It is required for dam-dependent methyl-directed DNA mismatch repair. May act as a 'molecular matchmaker', a protein that promotes the formation of a stable complex between two or more DNA-binding proteins in an ATP-dependent manner without itself being part of a final effector complex.</text>
</comment>
<comment type="similarity">
    <text evidence="1">Belongs to the DNA mismatch repair MutL/HexB family.</text>
</comment>
<organism>
    <name type="scientific">Xylella fastidiosa (strain M23)</name>
    <dbReference type="NCBI Taxonomy" id="405441"/>
    <lineage>
        <taxon>Bacteria</taxon>
        <taxon>Pseudomonadati</taxon>
        <taxon>Pseudomonadota</taxon>
        <taxon>Gammaproteobacteria</taxon>
        <taxon>Lysobacterales</taxon>
        <taxon>Lysobacteraceae</taxon>
        <taxon>Xylella</taxon>
    </lineage>
</organism>
<keyword id="KW-0227">DNA damage</keyword>
<keyword id="KW-0234">DNA repair</keyword>
<accession>B2I9E6</accession>
<feature type="chain" id="PRO_1000096702" description="DNA mismatch repair protein MutL">
    <location>
        <begin position="1"/>
        <end position="619"/>
    </location>
</feature>
<proteinExistence type="inferred from homology"/>
<gene>
    <name evidence="1" type="primary">mutL</name>
    <name type="ordered locus">XfasM23_2002</name>
</gene>
<dbReference type="EMBL" id="CP001011">
    <property type="protein sequence ID" value="ACB93401.1"/>
    <property type="molecule type" value="Genomic_DNA"/>
</dbReference>
<dbReference type="RefSeq" id="WP_012382761.1">
    <property type="nucleotide sequence ID" value="NC_010577.1"/>
</dbReference>
<dbReference type="SMR" id="B2I9E6"/>
<dbReference type="KEGG" id="xfn:XfasM23_2002"/>
<dbReference type="HOGENOM" id="CLU_004131_4_2_6"/>
<dbReference type="Proteomes" id="UP000001698">
    <property type="component" value="Chromosome"/>
</dbReference>
<dbReference type="GO" id="GO:0032300">
    <property type="term" value="C:mismatch repair complex"/>
    <property type="evidence" value="ECO:0007669"/>
    <property type="project" value="InterPro"/>
</dbReference>
<dbReference type="GO" id="GO:0005524">
    <property type="term" value="F:ATP binding"/>
    <property type="evidence" value="ECO:0007669"/>
    <property type="project" value="InterPro"/>
</dbReference>
<dbReference type="GO" id="GO:0016887">
    <property type="term" value="F:ATP hydrolysis activity"/>
    <property type="evidence" value="ECO:0007669"/>
    <property type="project" value="InterPro"/>
</dbReference>
<dbReference type="GO" id="GO:0140664">
    <property type="term" value="F:ATP-dependent DNA damage sensor activity"/>
    <property type="evidence" value="ECO:0007669"/>
    <property type="project" value="InterPro"/>
</dbReference>
<dbReference type="GO" id="GO:0030983">
    <property type="term" value="F:mismatched DNA binding"/>
    <property type="evidence" value="ECO:0007669"/>
    <property type="project" value="InterPro"/>
</dbReference>
<dbReference type="GO" id="GO:0006298">
    <property type="term" value="P:mismatch repair"/>
    <property type="evidence" value="ECO:0007669"/>
    <property type="project" value="UniProtKB-UniRule"/>
</dbReference>
<dbReference type="CDD" id="cd16926">
    <property type="entry name" value="HATPase_MutL-MLH-PMS-like"/>
    <property type="match status" value="1"/>
</dbReference>
<dbReference type="CDD" id="cd03482">
    <property type="entry name" value="MutL_Trans_MutL"/>
    <property type="match status" value="1"/>
</dbReference>
<dbReference type="FunFam" id="3.30.230.10:FF:000013">
    <property type="entry name" value="DNA mismatch repair endonuclease MutL"/>
    <property type="match status" value="1"/>
</dbReference>
<dbReference type="FunFam" id="3.30.565.10:FF:000003">
    <property type="entry name" value="DNA mismatch repair endonuclease MutL"/>
    <property type="match status" value="1"/>
</dbReference>
<dbReference type="Gene3D" id="3.30.230.10">
    <property type="match status" value="1"/>
</dbReference>
<dbReference type="Gene3D" id="3.30.565.10">
    <property type="entry name" value="Histidine kinase-like ATPase, C-terminal domain"/>
    <property type="match status" value="1"/>
</dbReference>
<dbReference type="Gene3D" id="3.30.1540.20">
    <property type="entry name" value="MutL, C-terminal domain, dimerisation subdomain"/>
    <property type="match status" value="1"/>
</dbReference>
<dbReference type="Gene3D" id="3.30.1370.100">
    <property type="entry name" value="MutL, C-terminal domain, regulatory subdomain"/>
    <property type="match status" value="1"/>
</dbReference>
<dbReference type="HAMAP" id="MF_00149">
    <property type="entry name" value="DNA_mis_repair"/>
    <property type="match status" value="1"/>
</dbReference>
<dbReference type="InterPro" id="IPR014762">
    <property type="entry name" value="DNA_mismatch_repair_CS"/>
</dbReference>
<dbReference type="InterPro" id="IPR020667">
    <property type="entry name" value="DNA_mismatch_repair_MutL"/>
</dbReference>
<dbReference type="InterPro" id="IPR013507">
    <property type="entry name" value="DNA_mismatch_S5_2-like"/>
</dbReference>
<dbReference type="InterPro" id="IPR036890">
    <property type="entry name" value="HATPase_C_sf"/>
</dbReference>
<dbReference type="InterPro" id="IPR002099">
    <property type="entry name" value="MutL/Mlh/PMS"/>
</dbReference>
<dbReference type="InterPro" id="IPR038973">
    <property type="entry name" value="MutL/Mlh/Pms-like"/>
</dbReference>
<dbReference type="InterPro" id="IPR014790">
    <property type="entry name" value="MutL_C"/>
</dbReference>
<dbReference type="InterPro" id="IPR042120">
    <property type="entry name" value="MutL_C_dimsub"/>
</dbReference>
<dbReference type="InterPro" id="IPR042121">
    <property type="entry name" value="MutL_C_regsub"/>
</dbReference>
<dbReference type="InterPro" id="IPR037198">
    <property type="entry name" value="MutL_C_sf"/>
</dbReference>
<dbReference type="InterPro" id="IPR020568">
    <property type="entry name" value="Ribosomal_Su5_D2-typ_SF"/>
</dbReference>
<dbReference type="InterPro" id="IPR014721">
    <property type="entry name" value="Ribsml_uS5_D2-typ_fold_subgr"/>
</dbReference>
<dbReference type="NCBIfam" id="TIGR00585">
    <property type="entry name" value="mutl"/>
    <property type="match status" value="1"/>
</dbReference>
<dbReference type="NCBIfam" id="NF000949">
    <property type="entry name" value="PRK00095.1-2"/>
    <property type="match status" value="1"/>
</dbReference>
<dbReference type="PANTHER" id="PTHR10073">
    <property type="entry name" value="DNA MISMATCH REPAIR PROTEIN MLH, PMS, MUTL"/>
    <property type="match status" value="1"/>
</dbReference>
<dbReference type="PANTHER" id="PTHR10073:SF12">
    <property type="entry name" value="DNA MISMATCH REPAIR PROTEIN MLH1"/>
    <property type="match status" value="1"/>
</dbReference>
<dbReference type="Pfam" id="PF01119">
    <property type="entry name" value="DNA_mis_repair"/>
    <property type="match status" value="1"/>
</dbReference>
<dbReference type="Pfam" id="PF13589">
    <property type="entry name" value="HATPase_c_3"/>
    <property type="match status" value="1"/>
</dbReference>
<dbReference type="Pfam" id="PF08676">
    <property type="entry name" value="MutL_C"/>
    <property type="match status" value="1"/>
</dbReference>
<dbReference type="SMART" id="SM01340">
    <property type="entry name" value="DNA_mis_repair"/>
    <property type="match status" value="1"/>
</dbReference>
<dbReference type="SMART" id="SM00853">
    <property type="entry name" value="MutL_C"/>
    <property type="match status" value="1"/>
</dbReference>
<dbReference type="SUPFAM" id="SSF55874">
    <property type="entry name" value="ATPase domain of HSP90 chaperone/DNA topoisomerase II/histidine kinase"/>
    <property type="match status" value="1"/>
</dbReference>
<dbReference type="SUPFAM" id="SSF118116">
    <property type="entry name" value="DNA mismatch repair protein MutL"/>
    <property type="match status" value="1"/>
</dbReference>
<dbReference type="SUPFAM" id="SSF54211">
    <property type="entry name" value="Ribosomal protein S5 domain 2-like"/>
    <property type="match status" value="1"/>
</dbReference>
<dbReference type="PROSITE" id="PS00058">
    <property type="entry name" value="DNA_MISMATCH_REPAIR_1"/>
    <property type="match status" value="1"/>
</dbReference>
<protein>
    <recommendedName>
        <fullName evidence="1">DNA mismatch repair protein MutL</fullName>
    </recommendedName>
</protein>
<reference key="1">
    <citation type="journal article" date="2010" name="J. Bacteriol.">
        <title>Whole genome sequences of two Xylella fastidiosa strains (M12 and M23) causing almond leaf scorch disease in California.</title>
        <authorList>
            <person name="Chen J."/>
            <person name="Xie G."/>
            <person name="Han S."/>
            <person name="Chertkov O."/>
            <person name="Sims D."/>
            <person name="Civerolo E.L."/>
        </authorList>
    </citation>
    <scope>NUCLEOTIDE SEQUENCE [LARGE SCALE GENOMIC DNA]</scope>
    <source>
        <strain>M23</strain>
    </source>
</reference>